<sequence>MTERTLVLIKPDGIERQLIGEIISRIERKGLTIAALQLRTVSAELASQHYAEHEGKPFFGSLLEFITSGPVVAAIVEGTRAIAAVRQLAGGTDPVQAAAPGTIRGDFALETQFNLVHGSDSAESAQREIALWFPGA</sequence>
<reference key="1">
    <citation type="journal article" date="2003" name="Proc. Natl. Acad. Sci. U.S.A.">
        <title>The complete genome sequence of Mycobacterium bovis.</title>
        <authorList>
            <person name="Garnier T."/>
            <person name="Eiglmeier K."/>
            <person name="Camus J.-C."/>
            <person name="Medina N."/>
            <person name="Mansoor H."/>
            <person name="Pryor M."/>
            <person name="Duthoy S."/>
            <person name="Grondin S."/>
            <person name="Lacroix C."/>
            <person name="Monsempe C."/>
            <person name="Simon S."/>
            <person name="Harris B."/>
            <person name="Atkin R."/>
            <person name="Doggett J."/>
            <person name="Mayes R."/>
            <person name="Keating L."/>
            <person name="Wheeler P.R."/>
            <person name="Parkhill J."/>
            <person name="Barrell B.G."/>
            <person name="Cole S.T."/>
            <person name="Gordon S.V."/>
            <person name="Hewinson R.G."/>
        </authorList>
    </citation>
    <scope>NUCLEOTIDE SEQUENCE [LARGE SCALE GENOMIC DNA]</scope>
    <source>
        <strain>ATCC BAA-935 / AF2122/97</strain>
    </source>
</reference>
<reference key="2">
    <citation type="journal article" date="2017" name="Genome Announc.">
        <title>Updated reference genome sequence and annotation of Mycobacterium bovis AF2122/97.</title>
        <authorList>
            <person name="Malone K.M."/>
            <person name="Farrell D."/>
            <person name="Stuber T.P."/>
            <person name="Schubert O.T."/>
            <person name="Aebersold R."/>
            <person name="Robbe-Austerman S."/>
            <person name="Gordon S.V."/>
        </authorList>
    </citation>
    <scope>NUCLEOTIDE SEQUENCE [LARGE SCALE GENOMIC DNA]</scope>
    <scope>GENOME REANNOTATION</scope>
    <source>
        <strain>ATCC BAA-935 / AF2122/97</strain>
    </source>
</reference>
<evidence type="ECO:0000250" key="1"/>
<evidence type="ECO:0000255" key="2">
    <source>
        <dbReference type="HAMAP-Rule" id="MF_00451"/>
    </source>
</evidence>
<evidence type="ECO:0000305" key="3"/>
<protein>
    <recommendedName>
        <fullName evidence="2">Nucleoside diphosphate kinase</fullName>
        <shortName evidence="2">NDK</shortName>
        <shortName evidence="2">NDP kinase</shortName>
        <ecNumber evidence="2">2.7.4.6</ecNumber>
    </recommendedName>
    <alternativeName>
        <fullName evidence="2">Nucleoside-2-P kinase</fullName>
    </alternativeName>
</protein>
<name>NDK_MYCBO</name>
<comment type="function">
    <text evidence="2">Major role in the synthesis of nucleoside triphosphates other than ATP. The ATP gamma phosphate is transferred to the NDP beta phosphate via a ping-pong mechanism, using a phosphorylated active-site intermediate.</text>
</comment>
<comment type="catalytic activity">
    <reaction evidence="2">
        <text>a 2'-deoxyribonucleoside 5'-diphosphate + ATP = a 2'-deoxyribonucleoside 5'-triphosphate + ADP</text>
        <dbReference type="Rhea" id="RHEA:44640"/>
        <dbReference type="ChEBI" id="CHEBI:30616"/>
        <dbReference type="ChEBI" id="CHEBI:61560"/>
        <dbReference type="ChEBI" id="CHEBI:73316"/>
        <dbReference type="ChEBI" id="CHEBI:456216"/>
        <dbReference type="EC" id="2.7.4.6"/>
    </reaction>
</comment>
<comment type="catalytic activity">
    <reaction evidence="2">
        <text>a ribonucleoside 5'-diphosphate + ATP = a ribonucleoside 5'-triphosphate + ADP</text>
        <dbReference type="Rhea" id="RHEA:18113"/>
        <dbReference type="ChEBI" id="CHEBI:30616"/>
        <dbReference type="ChEBI" id="CHEBI:57930"/>
        <dbReference type="ChEBI" id="CHEBI:61557"/>
        <dbReference type="ChEBI" id="CHEBI:456216"/>
        <dbReference type="EC" id="2.7.4.6"/>
    </reaction>
</comment>
<comment type="cofactor">
    <cofactor evidence="2">
        <name>Mg(2+)</name>
        <dbReference type="ChEBI" id="CHEBI:18420"/>
    </cofactor>
</comment>
<comment type="subunit">
    <text evidence="1">Homohexamer.</text>
</comment>
<comment type="subcellular location">
    <subcellularLocation>
        <location evidence="2">Cytoplasm</location>
    </subcellularLocation>
</comment>
<comment type="similarity">
    <text evidence="2 3">Belongs to the NDK family.</text>
</comment>
<gene>
    <name evidence="2" type="primary">ndk</name>
    <name type="synonym">ndkA</name>
    <name type="ordered locus">BQ2027_MB2472C</name>
</gene>
<accession>P84283</accession>
<accession>A0A1R3Y1L4</accession>
<accession>P71904</accession>
<accession>X2BL38</accession>
<organism>
    <name type="scientific">Mycobacterium bovis (strain ATCC BAA-935 / AF2122/97)</name>
    <dbReference type="NCBI Taxonomy" id="233413"/>
    <lineage>
        <taxon>Bacteria</taxon>
        <taxon>Bacillati</taxon>
        <taxon>Actinomycetota</taxon>
        <taxon>Actinomycetes</taxon>
        <taxon>Mycobacteriales</taxon>
        <taxon>Mycobacteriaceae</taxon>
        <taxon>Mycobacterium</taxon>
        <taxon>Mycobacterium tuberculosis complex</taxon>
    </lineage>
</organism>
<keyword id="KW-0067">ATP-binding</keyword>
<keyword id="KW-0963">Cytoplasm</keyword>
<keyword id="KW-0418">Kinase</keyword>
<keyword id="KW-0460">Magnesium</keyword>
<keyword id="KW-0479">Metal-binding</keyword>
<keyword id="KW-0546">Nucleotide metabolism</keyword>
<keyword id="KW-0547">Nucleotide-binding</keyword>
<keyword id="KW-0597">Phosphoprotein</keyword>
<keyword id="KW-1185">Reference proteome</keyword>
<keyword id="KW-0808">Transferase</keyword>
<proteinExistence type="inferred from homology"/>
<feature type="chain" id="PRO_0000137006" description="Nucleoside diphosphate kinase">
    <location>
        <begin position="1"/>
        <end position="136"/>
    </location>
</feature>
<feature type="active site" description="Pros-phosphohistidine intermediate" evidence="2">
    <location>
        <position position="117"/>
    </location>
</feature>
<feature type="binding site" evidence="2">
    <location>
        <position position="10"/>
    </location>
    <ligand>
        <name>ATP</name>
        <dbReference type="ChEBI" id="CHEBI:30616"/>
    </ligand>
</feature>
<feature type="binding site" evidence="2">
    <location>
        <position position="58"/>
    </location>
    <ligand>
        <name>ATP</name>
        <dbReference type="ChEBI" id="CHEBI:30616"/>
    </ligand>
</feature>
<feature type="binding site" evidence="2">
    <location>
        <position position="86"/>
    </location>
    <ligand>
        <name>ATP</name>
        <dbReference type="ChEBI" id="CHEBI:30616"/>
    </ligand>
</feature>
<feature type="binding site" evidence="2">
    <location>
        <position position="92"/>
    </location>
    <ligand>
        <name>ATP</name>
        <dbReference type="ChEBI" id="CHEBI:30616"/>
    </ligand>
</feature>
<feature type="binding site" evidence="2">
    <location>
        <position position="104"/>
    </location>
    <ligand>
        <name>ATP</name>
        <dbReference type="ChEBI" id="CHEBI:30616"/>
    </ligand>
</feature>
<feature type="binding site" evidence="2">
    <location>
        <position position="114"/>
    </location>
    <ligand>
        <name>ATP</name>
        <dbReference type="ChEBI" id="CHEBI:30616"/>
    </ligand>
</feature>
<dbReference type="EC" id="2.7.4.6" evidence="2"/>
<dbReference type="EMBL" id="LT708304">
    <property type="protein sequence ID" value="SIU01087.1"/>
    <property type="molecule type" value="Genomic_DNA"/>
</dbReference>
<dbReference type="RefSeq" id="NP_856119.1">
    <property type="nucleotide sequence ID" value="NC_002945.3"/>
</dbReference>
<dbReference type="RefSeq" id="WP_003412592.1">
    <property type="nucleotide sequence ID" value="NC_002945.4"/>
</dbReference>
<dbReference type="SMR" id="P84283"/>
<dbReference type="GeneID" id="45426435"/>
<dbReference type="KEGG" id="mbo:BQ2027_MB2472C"/>
<dbReference type="PATRIC" id="fig|233413.5.peg.2720"/>
<dbReference type="Proteomes" id="UP000001419">
    <property type="component" value="Chromosome"/>
</dbReference>
<dbReference type="GO" id="GO:0005737">
    <property type="term" value="C:cytoplasm"/>
    <property type="evidence" value="ECO:0007669"/>
    <property type="project" value="UniProtKB-SubCell"/>
</dbReference>
<dbReference type="GO" id="GO:0005524">
    <property type="term" value="F:ATP binding"/>
    <property type="evidence" value="ECO:0007669"/>
    <property type="project" value="UniProtKB-UniRule"/>
</dbReference>
<dbReference type="GO" id="GO:0046872">
    <property type="term" value="F:metal ion binding"/>
    <property type="evidence" value="ECO:0007669"/>
    <property type="project" value="UniProtKB-KW"/>
</dbReference>
<dbReference type="GO" id="GO:0004550">
    <property type="term" value="F:nucleoside diphosphate kinase activity"/>
    <property type="evidence" value="ECO:0007669"/>
    <property type="project" value="UniProtKB-UniRule"/>
</dbReference>
<dbReference type="GO" id="GO:0006241">
    <property type="term" value="P:CTP biosynthetic process"/>
    <property type="evidence" value="ECO:0007669"/>
    <property type="project" value="UniProtKB-UniRule"/>
</dbReference>
<dbReference type="GO" id="GO:0006183">
    <property type="term" value="P:GTP biosynthetic process"/>
    <property type="evidence" value="ECO:0007669"/>
    <property type="project" value="UniProtKB-UniRule"/>
</dbReference>
<dbReference type="GO" id="GO:0006228">
    <property type="term" value="P:UTP biosynthetic process"/>
    <property type="evidence" value="ECO:0007669"/>
    <property type="project" value="UniProtKB-UniRule"/>
</dbReference>
<dbReference type="CDD" id="cd04413">
    <property type="entry name" value="NDPk_I"/>
    <property type="match status" value="1"/>
</dbReference>
<dbReference type="FunFam" id="3.30.70.141:FF:000003">
    <property type="entry name" value="Nucleoside diphosphate kinase"/>
    <property type="match status" value="1"/>
</dbReference>
<dbReference type="Gene3D" id="3.30.70.141">
    <property type="entry name" value="Nucleoside diphosphate kinase-like domain"/>
    <property type="match status" value="1"/>
</dbReference>
<dbReference type="HAMAP" id="MF_00451">
    <property type="entry name" value="NDP_kinase"/>
    <property type="match status" value="1"/>
</dbReference>
<dbReference type="InterPro" id="IPR034907">
    <property type="entry name" value="NDK-like_dom"/>
</dbReference>
<dbReference type="InterPro" id="IPR036850">
    <property type="entry name" value="NDK-like_dom_sf"/>
</dbReference>
<dbReference type="InterPro" id="IPR001564">
    <property type="entry name" value="Nucleoside_diP_kinase"/>
</dbReference>
<dbReference type="NCBIfam" id="NF001908">
    <property type="entry name" value="PRK00668.1"/>
    <property type="match status" value="1"/>
</dbReference>
<dbReference type="PANTHER" id="PTHR11349">
    <property type="entry name" value="NUCLEOSIDE DIPHOSPHATE KINASE"/>
    <property type="match status" value="1"/>
</dbReference>
<dbReference type="Pfam" id="PF00334">
    <property type="entry name" value="NDK"/>
    <property type="match status" value="1"/>
</dbReference>
<dbReference type="PRINTS" id="PR01243">
    <property type="entry name" value="NUCDPKINASE"/>
</dbReference>
<dbReference type="SMART" id="SM00562">
    <property type="entry name" value="NDK"/>
    <property type="match status" value="1"/>
</dbReference>
<dbReference type="SUPFAM" id="SSF54919">
    <property type="entry name" value="Nucleoside diphosphate kinase, NDK"/>
    <property type="match status" value="1"/>
</dbReference>
<dbReference type="PROSITE" id="PS51374">
    <property type="entry name" value="NDPK_LIKE"/>
    <property type="match status" value="1"/>
</dbReference>